<name>GARL_SALAR</name>
<keyword id="KW-0456">Lyase</keyword>
<keyword id="KW-0460">Magnesium</keyword>
<keyword id="KW-0479">Metal-binding</keyword>
<keyword id="KW-1185">Reference proteome</keyword>
<comment type="function">
    <text evidence="1">Catalyzes the reversible retro-aldol cleavage of both 5-keto-4-deoxy-D-glucarate and 2-keto-3-deoxy-D-glucarate to pyruvate and tartronic semialdehyde.</text>
</comment>
<comment type="catalytic activity">
    <reaction evidence="1">
        <text>5-dehydro-4-deoxy-D-glucarate = 2-hydroxy-3-oxopropanoate + pyruvate</text>
        <dbReference type="Rhea" id="RHEA:27726"/>
        <dbReference type="ChEBI" id="CHEBI:15361"/>
        <dbReference type="ChEBI" id="CHEBI:42819"/>
        <dbReference type="ChEBI" id="CHEBI:57978"/>
    </reaction>
</comment>
<comment type="catalytic activity">
    <reaction evidence="1">
        <text>2-dehydro-3-deoxy-D-glucarate = 2-hydroxy-3-oxopropanoate + pyruvate</text>
        <dbReference type="Rhea" id="RHEA:10268"/>
        <dbReference type="ChEBI" id="CHEBI:15361"/>
        <dbReference type="ChEBI" id="CHEBI:57978"/>
        <dbReference type="ChEBI" id="CHEBI:58098"/>
        <dbReference type="EC" id="4.1.2.20"/>
    </reaction>
</comment>
<comment type="cofactor">
    <cofactor evidence="1">
        <name>Mg(2+)</name>
        <dbReference type="ChEBI" id="CHEBI:18420"/>
    </cofactor>
    <text evidence="1">Binds 1 Mg(2+) ion per subunit.</text>
</comment>
<comment type="pathway">
    <text evidence="1">Carbohydrate acid metabolism; galactarate degradation; D-glycerate from galactarate: step 2/3.</text>
</comment>
<comment type="subunit">
    <text evidence="1">Homohexamer; trimer of dimers.</text>
</comment>
<comment type="similarity">
    <text evidence="1">Belongs to the HpcH/HpaI aldolase family. KDGluc aldolase subfamily.</text>
</comment>
<feature type="chain" id="PRO_0000353153" description="5-keto-4-deoxy-D-glucarate aldolase">
    <location>
        <begin position="1"/>
        <end position="256"/>
    </location>
</feature>
<feature type="active site" description="Proton acceptor" evidence="1">
    <location>
        <position position="50"/>
    </location>
</feature>
<feature type="binding site" evidence="1">
    <location>
        <position position="151"/>
    </location>
    <ligand>
        <name>substrate</name>
    </ligand>
</feature>
<feature type="binding site" evidence="1">
    <location>
        <position position="153"/>
    </location>
    <ligand>
        <name>Mg(2+)</name>
        <dbReference type="ChEBI" id="CHEBI:18420"/>
    </ligand>
</feature>
<feature type="binding site" evidence="1">
    <location>
        <position position="178"/>
    </location>
    <ligand>
        <name>substrate</name>
    </ligand>
</feature>
<feature type="binding site" evidence="1">
    <location>
        <position position="179"/>
    </location>
    <ligand>
        <name>Mg(2+)</name>
        <dbReference type="ChEBI" id="CHEBI:18420"/>
    </ligand>
</feature>
<feature type="binding site" evidence="1">
    <location>
        <position position="179"/>
    </location>
    <ligand>
        <name>substrate</name>
    </ligand>
</feature>
<feature type="site" description="Transition state stabilizer" evidence="1">
    <location>
        <position position="75"/>
    </location>
</feature>
<feature type="site" description="Increases basicity of active site His" evidence="1">
    <location>
        <position position="89"/>
    </location>
</feature>
<sequence length="256" mass="27365">MNNAIFPNKFKVALAAQQVQIGCWSALASPITTEVLGLAGFDWLVLDGEHAPNDVTTLIPQLMALKGSASAPVVRVPTNEPVIIKRMLDIGFYNFLIPFVETQEEAARAVASTRYPPEGIRGVSVSHRANMFGTVPDYFAQSNKNITIIVQIESQLGVDNVDAIAATEGVDGIFVGPSDLAAAMGHLGNASHPDVQQTIQHIFARAKAHGKPCGILAPVEADARRYLEWGATFVAVGSDLGVFRAGTQKLADTFKK</sequence>
<organism>
    <name type="scientific">Salmonella arizonae (strain ATCC BAA-731 / CDC346-86 / RSK2980)</name>
    <dbReference type="NCBI Taxonomy" id="41514"/>
    <lineage>
        <taxon>Bacteria</taxon>
        <taxon>Pseudomonadati</taxon>
        <taxon>Pseudomonadota</taxon>
        <taxon>Gammaproteobacteria</taxon>
        <taxon>Enterobacterales</taxon>
        <taxon>Enterobacteriaceae</taxon>
        <taxon>Salmonella</taxon>
    </lineage>
</organism>
<evidence type="ECO:0000255" key="1">
    <source>
        <dbReference type="HAMAP-Rule" id="MF_01291"/>
    </source>
</evidence>
<reference key="1">
    <citation type="submission" date="2007-11" db="EMBL/GenBank/DDBJ databases">
        <authorList>
            <consortium name="The Salmonella enterica serovar Arizonae Genome Sequencing Project"/>
            <person name="McClelland M."/>
            <person name="Sanderson E.K."/>
            <person name="Porwollik S."/>
            <person name="Spieth J."/>
            <person name="Clifton W.S."/>
            <person name="Fulton R."/>
            <person name="Chunyan W."/>
            <person name="Wollam A."/>
            <person name="Shah N."/>
            <person name="Pepin K."/>
            <person name="Bhonagiri V."/>
            <person name="Nash W."/>
            <person name="Johnson M."/>
            <person name="Thiruvilangam P."/>
            <person name="Wilson R."/>
        </authorList>
    </citation>
    <scope>NUCLEOTIDE SEQUENCE [LARGE SCALE GENOMIC DNA]</scope>
    <source>
        <strain>ATCC BAA-731 / CDC346-86 / RSK2980</strain>
    </source>
</reference>
<protein>
    <recommendedName>
        <fullName evidence="1">5-keto-4-deoxy-D-glucarate aldolase</fullName>
        <shortName evidence="1">KDGluc aldolase</shortName>
        <shortName evidence="1">KDGlucA</shortName>
        <ecNumber evidence="1">4.1.2.20</ecNumber>
    </recommendedName>
    <alternativeName>
        <fullName evidence="1">2-dehydro-3-deoxy-D-glucarate aldolase</fullName>
    </alternativeName>
    <alternativeName>
        <fullName evidence="1">2-keto-3-deoxy-D-glucarate aldolase</fullName>
    </alternativeName>
    <alternativeName>
        <fullName evidence="1">5-dehydro-4-deoxy-D-glucarate aldolase</fullName>
    </alternativeName>
    <alternativeName>
        <fullName evidence="1">Alpha-keto-beta-deoxy-D-glucarate aldolase</fullName>
    </alternativeName>
</protein>
<proteinExistence type="inferred from homology"/>
<accession>A9MPQ4</accession>
<dbReference type="EC" id="4.1.2.20" evidence="1"/>
<dbReference type="EMBL" id="CP000880">
    <property type="protein sequence ID" value="ABX24147.1"/>
    <property type="molecule type" value="Genomic_DNA"/>
</dbReference>
<dbReference type="SMR" id="A9MPQ4"/>
<dbReference type="STRING" id="41514.SARI_04368"/>
<dbReference type="KEGG" id="ses:SARI_04368"/>
<dbReference type="HOGENOM" id="CLU_059964_1_0_6"/>
<dbReference type="UniPathway" id="UPA00565">
    <property type="reaction ID" value="UER00630"/>
</dbReference>
<dbReference type="Proteomes" id="UP000002084">
    <property type="component" value="Chromosome"/>
</dbReference>
<dbReference type="GO" id="GO:0005737">
    <property type="term" value="C:cytoplasm"/>
    <property type="evidence" value="ECO:0007669"/>
    <property type="project" value="TreeGrafter"/>
</dbReference>
<dbReference type="GO" id="GO:0008672">
    <property type="term" value="F:2-dehydro-3-deoxyglucarate aldolase activity"/>
    <property type="evidence" value="ECO:0007669"/>
    <property type="project" value="UniProtKB-UniRule"/>
</dbReference>
<dbReference type="GO" id="GO:0000287">
    <property type="term" value="F:magnesium ion binding"/>
    <property type="evidence" value="ECO:0007669"/>
    <property type="project" value="UniProtKB-UniRule"/>
</dbReference>
<dbReference type="GO" id="GO:0042838">
    <property type="term" value="P:D-glucarate catabolic process"/>
    <property type="evidence" value="ECO:0007669"/>
    <property type="project" value="UniProtKB-UniRule"/>
</dbReference>
<dbReference type="GO" id="GO:0046392">
    <property type="term" value="P:galactarate catabolic process"/>
    <property type="evidence" value="ECO:0007669"/>
    <property type="project" value="UniProtKB-UniRule"/>
</dbReference>
<dbReference type="FunFam" id="3.20.20.60:FF:000004">
    <property type="entry name" value="5-keto-4-deoxy-D-glucarate aldolase"/>
    <property type="match status" value="1"/>
</dbReference>
<dbReference type="Gene3D" id="3.20.20.60">
    <property type="entry name" value="Phosphoenolpyruvate-binding domains"/>
    <property type="match status" value="1"/>
</dbReference>
<dbReference type="HAMAP" id="MF_01291">
    <property type="entry name" value="KDGluc_aldolase"/>
    <property type="match status" value="1"/>
</dbReference>
<dbReference type="InterPro" id="IPR005000">
    <property type="entry name" value="Aldolase/citrate-lyase_domain"/>
</dbReference>
<dbReference type="InterPro" id="IPR017648">
    <property type="entry name" value="GarL"/>
</dbReference>
<dbReference type="InterPro" id="IPR050251">
    <property type="entry name" value="HpcH-HpaI_aldolase"/>
</dbReference>
<dbReference type="InterPro" id="IPR015813">
    <property type="entry name" value="Pyrv/PenolPyrv_kinase-like_dom"/>
</dbReference>
<dbReference type="InterPro" id="IPR040442">
    <property type="entry name" value="Pyrv_kinase-like_dom_sf"/>
</dbReference>
<dbReference type="NCBIfam" id="TIGR03239">
    <property type="entry name" value="GarL"/>
    <property type="match status" value="1"/>
</dbReference>
<dbReference type="NCBIfam" id="NF007849">
    <property type="entry name" value="PRK10558.1"/>
    <property type="match status" value="1"/>
</dbReference>
<dbReference type="PANTHER" id="PTHR30502">
    <property type="entry name" value="2-KETO-3-DEOXY-L-RHAMNONATE ALDOLASE"/>
    <property type="match status" value="1"/>
</dbReference>
<dbReference type="PANTHER" id="PTHR30502:SF4">
    <property type="entry name" value="5-KETO-4-DEOXY-D-GLUCARATE ALDOLASE"/>
    <property type="match status" value="1"/>
</dbReference>
<dbReference type="Pfam" id="PF03328">
    <property type="entry name" value="HpcH_HpaI"/>
    <property type="match status" value="1"/>
</dbReference>
<dbReference type="SUPFAM" id="SSF51621">
    <property type="entry name" value="Phosphoenolpyruvate/pyruvate domain"/>
    <property type="match status" value="1"/>
</dbReference>
<gene>
    <name evidence="1" type="primary">garL</name>
    <name type="ordered locus">SARI_04368</name>
</gene>